<proteinExistence type="inferred from homology"/>
<protein>
    <recommendedName>
        <fullName evidence="1">Adenosine deaminase</fullName>
        <ecNumber evidence="1">3.5.4.4</ecNumber>
    </recommendedName>
    <alternativeName>
        <fullName evidence="1">Adenosine aminohydrolase</fullName>
    </alternativeName>
</protein>
<evidence type="ECO:0000255" key="1">
    <source>
        <dbReference type="HAMAP-Rule" id="MF_00540"/>
    </source>
</evidence>
<keyword id="KW-0378">Hydrolase</keyword>
<keyword id="KW-0479">Metal-binding</keyword>
<keyword id="KW-0546">Nucleotide metabolism</keyword>
<keyword id="KW-0862">Zinc</keyword>
<accession>B1LER3</accession>
<sequence>MIDTTLPLTDIHRHLDGNIRPQTILELGRRYNISLPAQSLETLIPHVQVIANEPDLVSFLTKLDWGVKVLASLDACRRVAFENIEDAARNGLHYVELRFSPGYMAMAHQLPVAGVVEAVIDGVREGCRTFGVQAKLIGIMSRTFGEAACQQELEAFLAHRDQITALDLAGDELGFPGSLFLSHFNRARDADWHITVHAGEAAGPESIWQAIRELGAERIGHGVKAIEDRALMDFLAEQQIGIESCLTSNIQTSTVAELAAHPLKMFLEHGIRASINTDDPGVQGVDIIHEYTVAAPAAGLSREQIRQAQINGLEMAFLSAEEKRALREKVAAK</sequence>
<gene>
    <name evidence="1" type="primary">add</name>
    <name type="ordered locus">EcSMS35_1576</name>
</gene>
<reference key="1">
    <citation type="journal article" date="2008" name="J. Bacteriol.">
        <title>Insights into the environmental resistance gene pool from the genome sequence of the multidrug-resistant environmental isolate Escherichia coli SMS-3-5.</title>
        <authorList>
            <person name="Fricke W.F."/>
            <person name="Wright M.S."/>
            <person name="Lindell A.H."/>
            <person name="Harkins D.M."/>
            <person name="Baker-Austin C."/>
            <person name="Ravel J."/>
            <person name="Stepanauskas R."/>
        </authorList>
    </citation>
    <scope>NUCLEOTIDE SEQUENCE [LARGE SCALE GENOMIC DNA]</scope>
    <source>
        <strain>SMS-3-5 / SECEC</strain>
    </source>
</reference>
<dbReference type="EC" id="3.5.4.4" evidence="1"/>
<dbReference type="EMBL" id="CP000970">
    <property type="protein sequence ID" value="ACB20038.1"/>
    <property type="molecule type" value="Genomic_DNA"/>
</dbReference>
<dbReference type="RefSeq" id="WP_000567531.1">
    <property type="nucleotide sequence ID" value="NC_010498.1"/>
</dbReference>
<dbReference type="SMR" id="B1LER3"/>
<dbReference type="KEGG" id="ecm:EcSMS35_1576"/>
<dbReference type="HOGENOM" id="CLU_039228_0_2_6"/>
<dbReference type="Proteomes" id="UP000007011">
    <property type="component" value="Chromosome"/>
</dbReference>
<dbReference type="GO" id="GO:0005829">
    <property type="term" value="C:cytosol"/>
    <property type="evidence" value="ECO:0007669"/>
    <property type="project" value="TreeGrafter"/>
</dbReference>
<dbReference type="GO" id="GO:0046936">
    <property type="term" value="F:2'-deoxyadenosine deaminase activity"/>
    <property type="evidence" value="ECO:0007669"/>
    <property type="project" value="RHEA"/>
</dbReference>
<dbReference type="GO" id="GO:0004000">
    <property type="term" value="F:adenosine deaminase activity"/>
    <property type="evidence" value="ECO:0007669"/>
    <property type="project" value="UniProtKB-UniRule"/>
</dbReference>
<dbReference type="GO" id="GO:0008270">
    <property type="term" value="F:zinc ion binding"/>
    <property type="evidence" value="ECO:0007669"/>
    <property type="project" value="UniProtKB-UniRule"/>
</dbReference>
<dbReference type="GO" id="GO:0006154">
    <property type="term" value="P:adenosine catabolic process"/>
    <property type="evidence" value="ECO:0007669"/>
    <property type="project" value="TreeGrafter"/>
</dbReference>
<dbReference type="GO" id="GO:0043103">
    <property type="term" value="P:hypoxanthine salvage"/>
    <property type="evidence" value="ECO:0007669"/>
    <property type="project" value="TreeGrafter"/>
</dbReference>
<dbReference type="GO" id="GO:0046103">
    <property type="term" value="P:inosine biosynthetic process"/>
    <property type="evidence" value="ECO:0007669"/>
    <property type="project" value="TreeGrafter"/>
</dbReference>
<dbReference type="GO" id="GO:0009117">
    <property type="term" value="P:nucleotide metabolic process"/>
    <property type="evidence" value="ECO:0007669"/>
    <property type="project" value="UniProtKB-KW"/>
</dbReference>
<dbReference type="GO" id="GO:0009168">
    <property type="term" value="P:purine ribonucleoside monophosphate biosynthetic process"/>
    <property type="evidence" value="ECO:0007669"/>
    <property type="project" value="UniProtKB-UniRule"/>
</dbReference>
<dbReference type="CDD" id="cd01320">
    <property type="entry name" value="ADA"/>
    <property type="match status" value="1"/>
</dbReference>
<dbReference type="FunFam" id="3.20.20.140:FF:000009">
    <property type="entry name" value="Adenosine deaminase"/>
    <property type="match status" value="1"/>
</dbReference>
<dbReference type="Gene3D" id="3.20.20.140">
    <property type="entry name" value="Metal-dependent hydrolases"/>
    <property type="match status" value="1"/>
</dbReference>
<dbReference type="HAMAP" id="MF_00540">
    <property type="entry name" value="A_deaminase"/>
    <property type="match status" value="1"/>
</dbReference>
<dbReference type="InterPro" id="IPR006650">
    <property type="entry name" value="A/AMP_deam_AS"/>
</dbReference>
<dbReference type="InterPro" id="IPR028893">
    <property type="entry name" value="A_deaminase"/>
</dbReference>
<dbReference type="InterPro" id="IPR001365">
    <property type="entry name" value="A_deaminase_dom"/>
</dbReference>
<dbReference type="InterPro" id="IPR006330">
    <property type="entry name" value="Ado/ade_deaminase"/>
</dbReference>
<dbReference type="InterPro" id="IPR032466">
    <property type="entry name" value="Metal_Hydrolase"/>
</dbReference>
<dbReference type="NCBIfam" id="TIGR01430">
    <property type="entry name" value="aden_deam"/>
    <property type="match status" value="1"/>
</dbReference>
<dbReference type="NCBIfam" id="NF006846">
    <property type="entry name" value="PRK09358.1-1"/>
    <property type="match status" value="1"/>
</dbReference>
<dbReference type="PANTHER" id="PTHR11409">
    <property type="entry name" value="ADENOSINE DEAMINASE"/>
    <property type="match status" value="1"/>
</dbReference>
<dbReference type="PANTHER" id="PTHR11409:SF43">
    <property type="entry name" value="ADENOSINE DEAMINASE"/>
    <property type="match status" value="1"/>
</dbReference>
<dbReference type="Pfam" id="PF00962">
    <property type="entry name" value="A_deaminase"/>
    <property type="match status" value="1"/>
</dbReference>
<dbReference type="SUPFAM" id="SSF51556">
    <property type="entry name" value="Metallo-dependent hydrolases"/>
    <property type="match status" value="1"/>
</dbReference>
<dbReference type="PROSITE" id="PS00485">
    <property type="entry name" value="A_DEAMINASE"/>
    <property type="match status" value="1"/>
</dbReference>
<feature type="chain" id="PRO_1000128846" description="Adenosine deaminase">
    <location>
        <begin position="1"/>
        <end position="333"/>
    </location>
</feature>
<feature type="active site" description="Proton donor" evidence="1">
    <location>
        <position position="200"/>
    </location>
</feature>
<feature type="binding site" evidence="1">
    <location>
        <position position="12"/>
    </location>
    <ligand>
        <name>Zn(2+)</name>
        <dbReference type="ChEBI" id="CHEBI:29105"/>
        <note>catalytic</note>
    </ligand>
</feature>
<feature type="binding site" evidence="1">
    <location>
        <position position="14"/>
    </location>
    <ligand>
        <name>substrate</name>
    </ligand>
</feature>
<feature type="binding site" evidence="1">
    <location>
        <position position="14"/>
    </location>
    <ligand>
        <name>Zn(2+)</name>
        <dbReference type="ChEBI" id="CHEBI:29105"/>
        <note>catalytic</note>
    </ligand>
</feature>
<feature type="binding site" evidence="1">
    <location>
        <position position="16"/>
    </location>
    <ligand>
        <name>substrate</name>
    </ligand>
</feature>
<feature type="binding site" evidence="1">
    <location>
        <position position="170"/>
    </location>
    <ligand>
        <name>substrate</name>
    </ligand>
</feature>
<feature type="binding site" evidence="1">
    <location>
        <position position="197"/>
    </location>
    <ligand>
        <name>Zn(2+)</name>
        <dbReference type="ChEBI" id="CHEBI:29105"/>
        <note>catalytic</note>
    </ligand>
</feature>
<feature type="binding site" evidence="1">
    <location>
        <position position="278"/>
    </location>
    <ligand>
        <name>Zn(2+)</name>
        <dbReference type="ChEBI" id="CHEBI:29105"/>
        <note>catalytic</note>
    </ligand>
</feature>
<feature type="binding site" evidence="1">
    <location>
        <position position="279"/>
    </location>
    <ligand>
        <name>substrate</name>
    </ligand>
</feature>
<feature type="site" description="Important for catalytic activity" evidence="1">
    <location>
        <position position="221"/>
    </location>
</feature>
<organism>
    <name type="scientific">Escherichia coli (strain SMS-3-5 / SECEC)</name>
    <dbReference type="NCBI Taxonomy" id="439855"/>
    <lineage>
        <taxon>Bacteria</taxon>
        <taxon>Pseudomonadati</taxon>
        <taxon>Pseudomonadota</taxon>
        <taxon>Gammaproteobacteria</taxon>
        <taxon>Enterobacterales</taxon>
        <taxon>Enterobacteriaceae</taxon>
        <taxon>Escherichia</taxon>
    </lineage>
</organism>
<name>ADD_ECOSM</name>
<comment type="function">
    <text evidence="1">Catalyzes the hydrolytic deamination of adenosine and 2-deoxyadenosine.</text>
</comment>
<comment type="catalytic activity">
    <reaction evidence="1">
        <text>adenosine + H2O + H(+) = inosine + NH4(+)</text>
        <dbReference type="Rhea" id="RHEA:24408"/>
        <dbReference type="ChEBI" id="CHEBI:15377"/>
        <dbReference type="ChEBI" id="CHEBI:15378"/>
        <dbReference type="ChEBI" id="CHEBI:16335"/>
        <dbReference type="ChEBI" id="CHEBI:17596"/>
        <dbReference type="ChEBI" id="CHEBI:28938"/>
        <dbReference type="EC" id="3.5.4.4"/>
    </reaction>
    <physiologicalReaction direction="left-to-right" evidence="1">
        <dbReference type="Rhea" id="RHEA:24409"/>
    </physiologicalReaction>
</comment>
<comment type="catalytic activity">
    <reaction evidence="1">
        <text>2'-deoxyadenosine + H2O + H(+) = 2'-deoxyinosine + NH4(+)</text>
        <dbReference type="Rhea" id="RHEA:28190"/>
        <dbReference type="ChEBI" id="CHEBI:15377"/>
        <dbReference type="ChEBI" id="CHEBI:15378"/>
        <dbReference type="ChEBI" id="CHEBI:17256"/>
        <dbReference type="ChEBI" id="CHEBI:28938"/>
        <dbReference type="ChEBI" id="CHEBI:28997"/>
        <dbReference type="EC" id="3.5.4.4"/>
    </reaction>
    <physiologicalReaction direction="left-to-right" evidence="1">
        <dbReference type="Rhea" id="RHEA:28191"/>
    </physiologicalReaction>
</comment>
<comment type="cofactor">
    <cofactor evidence="1">
        <name>Zn(2+)</name>
        <dbReference type="ChEBI" id="CHEBI:29105"/>
    </cofactor>
    <text evidence="1">Binds 1 zinc ion per subunit.</text>
</comment>
<comment type="similarity">
    <text evidence="1">Belongs to the metallo-dependent hydrolases superfamily. Adenosine and AMP deaminases family. Adenosine deaminase subfamily.</text>
</comment>